<reference key="1">
    <citation type="journal article" date="2009" name="PLoS Biol.">
        <title>Lineage-specific biology revealed by a finished genome assembly of the mouse.</title>
        <authorList>
            <person name="Church D.M."/>
            <person name="Goodstadt L."/>
            <person name="Hillier L.W."/>
            <person name="Zody M.C."/>
            <person name="Goldstein S."/>
            <person name="She X."/>
            <person name="Bult C.J."/>
            <person name="Agarwala R."/>
            <person name="Cherry J.L."/>
            <person name="DiCuccio M."/>
            <person name="Hlavina W."/>
            <person name="Kapustin Y."/>
            <person name="Meric P."/>
            <person name="Maglott D."/>
            <person name="Birtle Z."/>
            <person name="Marques A.C."/>
            <person name="Graves T."/>
            <person name="Zhou S."/>
            <person name="Teague B."/>
            <person name="Potamousis K."/>
            <person name="Churas C."/>
            <person name="Place M."/>
            <person name="Herschleb J."/>
            <person name="Runnheim R."/>
            <person name="Forrest D."/>
            <person name="Amos-Landgraf J."/>
            <person name="Schwartz D.C."/>
            <person name="Cheng Z."/>
            <person name="Lindblad-Toh K."/>
            <person name="Eichler E.E."/>
            <person name="Ponting C.P."/>
        </authorList>
    </citation>
    <scope>NUCLEOTIDE SEQUENCE [LARGE SCALE GENOMIC DNA]</scope>
    <source>
        <strain>C57BL/6J</strain>
    </source>
</reference>
<reference key="2">
    <citation type="submission" date="2005-09" db="EMBL/GenBank/DDBJ databases">
        <authorList>
            <person name="Mural R.J."/>
            <person name="Adams M.D."/>
            <person name="Myers E.W."/>
            <person name="Smith H.O."/>
            <person name="Venter J.C."/>
        </authorList>
    </citation>
    <scope>NUCLEOTIDE SEQUENCE [LARGE SCALE GENOMIC DNA]</scope>
</reference>
<reference key="3">
    <citation type="journal article" date="2004" name="Genome Res.">
        <title>The status, quality, and expansion of the NIH full-length cDNA project: the Mammalian Gene Collection (MGC).</title>
        <authorList>
            <consortium name="The MGC Project Team"/>
        </authorList>
    </citation>
    <scope>NUCLEOTIDE SEQUENCE [LARGE SCALE MRNA]</scope>
    <source>
        <strain>FVB/N</strain>
        <tissue>Colon</tissue>
    </source>
</reference>
<reference key="4">
    <citation type="journal article" date="2004" name="BMC Genomics">
        <title>Identification of a novel gene family that includes the interferon-inducible human genes 6-16 and ISG12.</title>
        <authorList>
            <person name="Parker N."/>
            <person name="Porter A.C.G."/>
        </authorList>
    </citation>
    <scope>IDENTIFICATION</scope>
</reference>
<reference key="5">
    <citation type="journal article" date="2011" name="Cell Death Differ.">
        <title>Interferon-stimulated gene ISG12b2 is localized to the inner mitochondrial membrane and mediates virus-induced cell death.</title>
        <authorList>
            <person name="Lu M.Y."/>
            <person name="Liao F."/>
        </authorList>
    </citation>
    <scope>FUNCTION</scope>
    <scope>SUBUNIT</scope>
    <scope>INTERACTION WITH ADENINE NUCLEOTIDE TRANSLOCASE; BAK1 AND BAX</scope>
    <scope>SUBCELLULAR LOCATION</scope>
    <scope>INDUCTION</scope>
    <scope>TRANSIT PEPTIDE</scope>
</reference>
<evidence type="ECO:0000255" key="1"/>
<evidence type="ECO:0000256" key="2">
    <source>
        <dbReference type="SAM" id="MobiDB-lite"/>
    </source>
</evidence>
<evidence type="ECO:0000269" key="3">
    <source>
    </source>
</evidence>
<evidence type="ECO:0000303" key="4">
    <source>
    </source>
</evidence>
<evidence type="ECO:0000305" key="5"/>
<evidence type="ECO:0000305" key="6">
    <source>
    </source>
</evidence>
<evidence type="ECO:0000312" key="7">
    <source>
        <dbReference type="MGI" id="MGI:1916390"/>
    </source>
</evidence>
<feature type="transit peptide" description="Mitochondrion" evidence="6">
    <location>
        <begin position="1"/>
        <end position="90"/>
    </location>
</feature>
<feature type="chain" id="PRO_0000416108" description="Interferon alpha-inducible protein 27-like protein 2B">
    <location>
        <begin position="91"/>
        <end position="283"/>
    </location>
</feature>
<feature type="transmembrane region" description="Helical" evidence="1">
    <location>
        <begin position="130"/>
        <end position="150"/>
    </location>
</feature>
<feature type="transmembrane region" description="Helical" evidence="1">
    <location>
        <begin position="176"/>
        <end position="196"/>
    </location>
</feature>
<feature type="transmembrane region" description="Helical" evidence="1">
    <location>
        <begin position="202"/>
        <end position="222"/>
    </location>
</feature>
<feature type="region of interest" description="Disordered" evidence="2">
    <location>
        <begin position="90"/>
        <end position="120"/>
    </location>
</feature>
<feature type="region of interest" description="Disordered" evidence="2">
    <location>
        <begin position="227"/>
        <end position="283"/>
    </location>
</feature>
<feature type="compositionally biased region" description="Low complexity" evidence="2">
    <location>
        <begin position="242"/>
        <end position="283"/>
    </location>
</feature>
<proteinExistence type="evidence at protein level"/>
<sequence>MKRKFVGAAIGGALAVAGAPVALSAVGFTGAGIAAGSIAAKMMSAAAIANGGGIAAGGLVATLQSVGVLGLSTITNIILVAVGTATGARAEGSMGASREQESGPQDPPQELQEPQEPPSCKKQDLNLGKFVGAAIGGALAVAGAPIALSAVGFTGAGIAAGSIAAKMMSAAAIANGGGIAAGGLVATLQSVGILGLSTSTNIILGAVGAATGATAAGAMGACREQEPGLQDLQQEPKEPQEPQELQKQQEPQEPQELQKQQETQETQETQELQKTQEPPSYEK</sequence>
<comment type="function">
    <text evidence="3">Functions in the intrinsic apoptotic signaling pathway and may have an interferon-induced antiviral activity.</text>
</comment>
<comment type="subunit">
    <text evidence="3">Homooligomer (PubMed:21151029). Interacts with BAK1 (PubMed:21151029). Interacts with BAX (PubMed:21151029). Interacts with adenine nucleotide translocase (PubMed:21151029).</text>
</comment>
<comment type="subcellular location">
    <subcellularLocation>
        <location evidence="3">Mitochondrion inner membrane</location>
        <topology evidence="1">Multi-pass membrane protein</topology>
    </subcellularLocation>
</comment>
<comment type="induction">
    <text evidence="3">Up-regulated by type-I interferon (PubMed:21151029). Up-regulated by poly(I:C) (PubMed:21151029).</text>
</comment>
<comment type="similarity">
    <text evidence="5">Belongs to the IFI6/IFI27 family.</text>
</comment>
<protein>
    <recommendedName>
        <fullName evidence="5">Interferon alpha-inducible protein 27-like protein 2B</fullName>
    </recommendedName>
    <alternativeName>
        <fullName evidence="4">Interferon-stimulated gene 12 protein B2</fullName>
        <shortName evidence="4">ISG12(b2)</shortName>
    </alternativeName>
</protein>
<gene>
    <name evidence="7" type="primary">Ifi27l2b</name>
    <name type="synonym">Isg12(b2)</name>
</gene>
<accession>Q8VC49</accession>
<accession>Q6IEB6</accession>
<name>IF27B_MOUSE</name>
<organism>
    <name type="scientific">Mus musculus</name>
    <name type="common">Mouse</name>
    <dbReference type="NCBI Taxonomy" id="10090"/>
    <lineage>
        <taxon>Eukaryota</taxon>
        <taxon>Metazoa</taxon>
        <taxon>Chordata</taxon>
        <taxon>Craniata</taxon>
        <taxon>Vertebrata</taxon>
        <taxon>Euteleostomi</taxon>
        <taxon>Mammalia</taxon>
        <taxon>Eutheria</taxon>
        <taxon>Euarchontoglires</taxon>
        <taxon>Glires</taxon>
        <taxon>Rodentia</taxon>
        <taxon>Myomorpha</taxon>
        <taxon>Muroidea</taxon>
        <taxon>Muridae</taxon>
        <taxon>Murinae</taxon>
        <taxon>Mus</taxon>
        <taxon>Mus</taxon>
    </lineage>
</organism>
<keyword id="KW-0051">Antiviral defense</keyword>
<keyword id="KW-0053">Apoptosis</keyword>
<keyword id="KW-0391">Immunity</keyword>
<keyword id="KW-0399">Innate immunity</keyword>
<keyword id="KW-0472">Membrane</keyword>
<keyword id="KW-0496">Mitochondrion</keyword>
<keyword id="KW-0999">Mitochondrion inner membrane</keyword>
<keyword id="KW-1185">Reference proteome</keyword>
<keyword id="KW-0809">Transit peptide</keyword>
<keyword id="KW-0812">Transmembrane</keyword>
<keyword id="KW-1133">Transmembrane helix</keyword>
<dbReference type="EMBL" id="AC154347">
    <property type="status" value="NOT_ANNOTATED_CDS"/>
    <property type="molecule type" value="Genomic_DNA"/>
</dbReference>
<dbReference type="EMBL" id="CH466549">
    <property type="protein sequence ID" value="EDL18826.1"/>
    <property type="molecule type" value="Genomic_DNA"/>
</dbReference>
<dbReference type="EMBL" id="BC021795">
    <property type="protein sequence ID" value="AAH21795.1"/>
    <property type="molecule type" value="mRNA"/>
</dbReference>
<dbReference type="EMBL" id="BN000232">
    <property type="protein sequence ID" value="CAE00399.1"/>
    <property type="molecule type" value="mRNA"/>
</dbReference>
<dbReference type="CCDS" id="CCDS26133.1"/>
<dbReference type="RefSeq" id="NP_663424.1">
    <property type="nucleotide sequence ID" value="NM_145449.2"/>
</dbReference>
<dbReference type="FunCoup" id="Q8VC49">
    <property type="interactions" value="1"/>
</dbReference>
<dbReference type="STRING" id="10090.ENSMUSP00000041712"/>
<dbReference type="PaxDb" id="10090-ENSMUSP00000041712"/>
<dbReference type="PeptideAtlas" id="Q8VC49"/>
<dbReference type="ProteomicsDB" id="269375"/>
<dbReference type="DNASU" id="217845"/>
<dbReference type="Ensembl" id="ENSMUST00000044687.7">
    <property type="protein sequence ID" value="ENSMUSP00000041712.7"/>
    <property type="gene ID" value="ENSMUSG00000021208.10"/>
</dbReference>
<dbReference type="GeneID" id="217845"/>
<dbReference type="KEGG" id="mmu:217845"/>
<dbReference type="UCSC" id="uc007ovv.1">
    <property type="organism name" value="mouse"/>
</dbReference>
<dbReference type="AGR" id="MGI:1916390"/>
<dbReference type="CTD" id="217845"/>
<dbReference type="MGI" id="MGI:1916390">
    <property type="gene designation" value="Ifi27l2b"/>
</dbReference>
<dbReference type="VEuPathDB" id="HostDB:ENSMUSG00000021208"/>
<dbReference type="eggNOG" id="ENOG502S85T">
    <property type="taxonomic scope" value="Eukaryota"/>
</dbReference>
<dbReference type="GeneTree" id="ENSGT00940000155018"/>
<dbReference type="HOGENOM" id="CLU_983401_0_0_1"/>
<dbReference type="InParanoid" id="Q8VC49"/>
<dbReference type="OMA" id="KQRRDPT"/>
<dbReference type="OrthoDB" id="9635005at2759"/>
<dbReference type="TreeFam" id="TF340510"/>
<dbReference type="BioGRID-ORCS" id="217845">
    <property type="hits" value="2 hits in 76 CRISPR screens"/>
</dbReference>
<dbReference type="PRO" id="PR:Q8VC49"/>
<dbReference type="Proteomes" id="UP000000589">
    <property type="component" value="Chromosome 12"/>
</dbReference>
<dbReference type="RNAct" id="Q8VC49">
    <property type="molecule type" value="protein"/>
</dbReference>
<dbReference type="Bgee" id="ENSMUSG00000021208">
    <property type="expression patterns" value="Expressed in small intestine Peyer's patch and 77 other cell types or tissues"/>
</dbReference>
<dbReference type="GO" id="GO:0005743">
    <property type="term" value="C:mitochondrial inner membrane"/>
    <property type="evidence" value="ECO:0000314"/>
    <property type="project" value="UniProtKB"/>
</dbReference>
<dbReference type="GO" id="GO:0042802">
    <property type="term" value="F:identical protein binding"/>
    <property type="evidence" value="ECO:0000314"/>
    <property type="project" value="UniProtKB"/>
</dbReference>
<dbReference type="GO" id="GO:0051607">
    <property type="term" value="P:defense response to virus"/>
    <property type="evidence" value="ECO:0007669"/>
    <property type="project" value="UniProtKB-KW"/>
</dbReference>
<dbReference type="GO" id="GO:0045087">
    <property type="term" value="P:innate immune response"/>
    <property type="evidence" value="ECO:0007669"/>
    <property type="project" value="UniProtKB-KW"/>
</dbReference>
<dbReference type="GO" id="GO:0097193">
    <property type="term" value="P:intrinsic apoptotic signaling pathway"/>
    <property type="evidence" value="ECO:0000315"/>
    <property type="project" value="UniProtKB"/>
</dbReference>
<dbReference type="Gene3D" id="6.10.110.10">
    <property type="match status" value="2"/>
</dbReference>
<dbReference type="InterPro" id="IPR009311">
    <property type="entry name" value="IFI6/IFI27-like"/>
</dbReference>
<dbReference type="InterPro" id="IPR038213">
    <property type="entry name" value="IFI6/IFI27-like_sf"/>
</dbReference>
<dbReference type="PANTHER" id="PTHR16932">
    <property type="entry name" value="INTERFERON ALPHA-INDUCIBLE PROTEIN 27"/>
    <property type="match status" value="1"/>
</dbReference>
<dbReference type="PANTHER" id="PTHR16932:SF2">
    <property type="entry name" value="INTERFERON ALPHA-INDUCIBLE PROTEIN 27, MITOCHONDRIAL"/>
    <property type="match status" value="1"/>
</dbReference>
<dbReference type="Pfam" id="PF06140">
    <property type="entry name" value="Ifi-6-16"/>
    <property type="match status" value="2"/>
</dbReference>